<gene>
    <name evidence="1" type="primary">rpmI</name>
    <name type="ordered locus">HEAR1799</name>
</gene>
<proteinExistence type="inferred from homology"/>
<keyword id="KW-1185">Reference proteome</keyword>
<keyword id="KW-0687">Ribonucleoprotein</keyword>
<keyword id="KW-0689">Ribosomal protein</keyword>
<evidence type="ECO:0000255" key="1">
    <source>
        <dbReference type="HAMAP-Rule" id="MF_00514"/>
    </source>
</evidence>
<evidence type="ECO:0000256" key="2">
    <source>
        <dbReference type="SAM" id="MobiDB-lite"/>
    </source>
</evidence>
<evidence type="ECO:0000305" key="3"/>
<protein>
    <recommendedName>
        <fullName evidence="1">Large ribosomal subunit protein bL35</fullName>
    </recommendedName>
    <alternativeName>
        <fullName evidence="3">50S ribosomal protein L35</fullName>
    </alternativeName>
</protein>
<sequence length="65" mass="7336">MPKMKTKSGAKKRFRVRPGGTVKRGQAFKRHILTKKTTKNKRQLRGSVGVHDTNMVSVRAMMPNA</sequence>
<feature type="chain" id="PRO_1000050700" description="Large ribosomal subunit protein bL35">
    <location>
        <begin position="1"/>
        <end position="65"/>
    </location>
</feature>
<feature type="region of interest" description="Disordered" evidence="2">
    <location>
        <begin position="1"/>
        <end position="25"/>
    </location>
</feature>
<feature type="compositionally biased region" description="Basic residues" evidence="2">
    <location>
        <begin position="1"/>
        <end position="16"/>
    </location>
</feature>
<reference key="1">
    <citation type="journal article" date="2007" name="PLoS Genet.">
        <title>A tale of two oxidation states: bacterial colonization of arsenic-rich environments.</title>
        <authorList>
            <person name="Muller D."/>
            <person name="Medigue C."/>
            <person name="Koechler S."/>
            <person name="Barbe V."/>
            <person name="Barakat M."/>
            <person name="Talla E."/>
            <person name="Bonnefoy V."/>
            <person name="Krin E."/>
            <person name="Arsene-Ploetze F."/>
            <person name="Carapito C."/>
            <person name="Chandler M."/>
            <person name="Cournoyer B."/>
            <person name="Cruveiller S."/>
            <person name="Dossat C."/>
            <person name="Duval S."/>
            <person name="Heymann M."/>
            <person name="Leize E."/>
            <person name="Lieutaud A."/>
            <person name="Lievremont D."/>
            <person name="Makita Y."/>
            <person name="Mangenot S."/>
            <person name="Nitschke W."/>
            <person name="Ortet P."/>
            <person name="Perdrial N."/>
            <person name="Schoepp B."/>
            <person name="Siguier P."/>
            <person name="Simeonova D.D."/>
            <person name="Rouy Z."/>
            <person name="Segurens B."/>
            <person name="Turlin E."/>
            <person name="Vallenet D."/>
            <person name="van Dorsselaer A."/>
            <person name="Weiss S."/>
            <person name="Weissenbach J."/>
            <person name="Lett M.-C."/>
            <person name="Danchin A."/>
            <person name="Bertin P.N."/>
        </authorList>
    </citation>
    <scope>NUCLEOTIDE SEQUENCE [LARGE SCALE GENOMIC DNA]</scope>
    <source>
        <strain>ULPAs1</strain>
    </source>
</reference>
<accession>A4G617</accession>
<comment type="similarity">
    <text evidence="1">Belongs to the bacterial ribosomal protein bL35 family.</text>
</comment>
<dbReference type="EMBL" id="CU207211">
    <property type="protein sequence ID" value="CAL61954.1"/>
    <property type="molecule type" value="Genomic_DNA"/>
</dbReference>
<dbReference type="SMR" id="A4G617"/>
<dbReference type="STRING" id="204773.HEAR1799"/>
<dbReference type="KEGG" id="har:HEAR1799"/>
<dbReference type="eggNOG" id="COG0291">
    <property type="taxonomic scope" value="Bacteria"/>
</dbReference>
<dbReference type="HOGENOM" id="CLU_169643_1_0_4"/>
<dbReference type="OrthoDB" id="47476at2"/>
<dbReference type="Proteomes" id="UP000006697">
    <property type="component" value="Chromosome"/>
</dbReference>
<dbReference type="GO" id="GO:0022625">
    <property type="term" value="C:cytosolic large ribosomal subunit"/>
    <property type="evidence" value="ECO:0007669"/>
    <property type="project" value="TreeGrafter"/>
</dbReference>
<dbReference type="GO" id="GO:0003735">
    <property type="term" value="F:structural constituent of ribosome"/>
    <property type="evidence" value="ECO:0007669"/>
    <property type="project" value="InterPro"/>
</dbReference>
<dbReference type="GO" id="GO:0006412">
    <property type="term" value="P:translation"/>
    <property type="evidence" value="ECO:0007669"/>
    <property type="project" value="UniProtKB-UniRule"/>
</dbReference>
<dbReference type="FunFam" id="4.10.410.60:FF:000001">
    <property type="entry name" value="50S ribosomal protein L35"/>
    <property type="match status" value="1"/>
</dbReference>
<dbReference type="Gene3D" id="4.10.410.60">
    <property type="match status" value="1"/>
</dbReference>
<dbReference type="HAMAP" id="MF_00514">
    <property type="entry name" value="Ribosomal_bL35"/>
    <property type="match status" value="1"/>
</dbReference>
<dbReference type="InterPro" id="IPR001706">
    <property type="entry name" value="Ribosomal_bL35"/>
</dbReference>
<dbReference type="InterPro" id="IPR021137">
    <property type="entry name" value="Ribosomal_bL35-like"/>
</dbReference>
<dbReference type="InterPro" id="IPR018265">
    <property type="entry name" value="Ribosomal_bL35_CS"/>
</dbReference>
<dbReference type="InterPro" id="IPR037229">
    <property type="entry name" value="Ribosomal_bL35_sf"/>
</dbReference>
<dbReference type="NCBIfam" id="TIGR00001">
    <property type="entry name" value="rpmI_bact"/>
    <property type="match status" value="1"/>
</dbReference>
<dbReference type="PANTHER" id="PTHR33343">
    <property type="entry name" value="54S RIBOSOMAL PROTEIN BL35M"/>
    <property type="match status" value="1"/>
</dbReference>
<dbReference type="PANTHER" id="PTHR33343:SF1">
    <property type="entry name" value="LARGE RIBOSOMAL SUBUNIT PROTEIN BL35M"/>
    <property type="match status" value="1"/>
</dbReference>
<dbReference type="Pfam" id="PF01632">
    <property type="entry name" value="Ribosomal_L35p"/>
    <property type="match status" value="1"/>
</dbReference>
<dbReference type="PRINTS" id="PR00064">
    <property type="entry name" value="RIBOSOMALL35"/>
</dbReference>
<dbReference type="SUPFAM" id="SSF143034">
    <property type="entry name" value="L35p-like"/>
    <property type="match status" value="1"/>
</dbReference>
<dbReference type="PROSITE" id="PS00936">
    <property type="entry name" value="RIBOSOMAL_L35"/>
    <property type="match status" value="1"/>
</dbReference>
<name>RL35_HERAR</name>
<organism>
    <name type="scientific">Herminiimonas arsenicoxydans</name>
    <dbReference type="NCBI Taxonomy" id="204773"/>
    <lineage>
        <taxon>Bacteria</taxon>
        <taxon>Pseudomonadati</taxon>
        <taxon>Pseudomonadota</taxon>
        <taxon>Betaproteobacteria</taxon>
        <taxon>Burkholderiales</taxon>
        <taxon>Oxalobacteraceae</taxon>
        <taxon>Herminiimonas</taxon>
    </lineage>
</organism>